<keyword id="KW-0067">ATP-binding</keyword>
<keyword id="KW-0997">Cell inner membrane</keyword>
<keyword id="KW-1003">Cell membrane</keyword>
<keyword id="KW-0378">Hydrolase</keyword>
<keyword id="KW-0472">Membrane</keyword>
<keyword id="KW-0479">Metal-binding</keyword>
<keyword id="KW-0482">Metalloprotease</keyword>
<keyword id="KW-0547">Nucleotide-binding</keyword>
<keyword id="KW-0645">Protease</keyword>
<keyword id="KW-1185">Reference proteome</keyword>
<keyword id="KW-0812">Transmembrane</keyword>
<keyword id="KW-1133">Transmembrane helix</keyword>
<keyword id="KW-0862">Zinc</keyword>
<proteinExistence type="inferred from homology"/>
<sequence length="637" mass="70066">MNNQGRSILAWAALFIFVILLFNVFQSDGLLGVRNNITFSDFLTRVDEKTINSVKIQGRVIEGTANDGSTFSTYSPDYPDLVNRLTSNDVNIEVVPLETRMNTFLGFLISWFPMLLLIGVWVFFMRQMHGGGKAMGFGKSKARLLSDKGPKITFKDVAGIDEAKEELTEIVDFLRDPSKFQKLGGKIPKGCLLIGPPGTGKTLLAKAIAGEANVPFFSISGSDFVEMFVGVGASRVRDMFEQGKRNAPCIIFIDEIDAVGRHRGIGMGGGNDEREQTLNQMLVEMDGFEANEGVVIIAATNRPDVLDRALLRPGRFDRQIAVANPDINGREQILKVHLKKIKYNSTVLARIIARGTPGFSGAELANLVNEAALIAARLGKKEVDMHDMEEAKDKVLMGVVRRSIAMSEKEKRLTAYHEGGHALVGLYCPAASPIHKATIIPRGNALGMVQRLPETDEYSQNREQMESSIAVYMAGRVAEEIIFGRNKVTSGASSDIKGATNIARAMVTKAGLSDLIGPIFHGSNSDDMYGRQSSNEISEATAELIDAEVKRIITQGYEFAKDILTKHIDQLHTLANALIEYETLSGQQIKNLLSGRALDSEEENKFPFNDSHTIKIDKENLHEKVKSTKDKKENIIS</sequence>
<feature type="chain" id="PRO_0000084646" description="ATP-dependent zinc metalloprotease FtsH">
    <location>
        <begin position="1"/>
        <end position="637"/>
    </location>
</feature>
<feature type="topological domain" description="Cytoplasmic" evidence="1">
    <location>
        <begin position="1"/>
        <end position="6"/>
    </location>
</feature>
<feature type="transmembrane region" description="Helical" evidence="1">
    <location>
        <begin position="7"/>
        <end position="27"/>
    </location>
</feature>
<feature type="topological domain" description="Periplasmic" evidence="1">
    <location>
        <begin position="28"/>
        <end position="103"/>
    </location>
</feature>
<feature type="transmembrane region" description="Helical" evidence="1">
    <location>
        <begin position="104"/>
        <end position="124"/>
    </location>
</feature>
<feature type="topological domain" description="Cytoplasmic" evidence="1">
    <location>
        <begin position="125"/>
        <end position="637"/>
    </location>
</feature>
<feature type="active site" evidence="1">
    <location>
        <position position="418"/>
    </location>
</feature>
<feature type="binding site" evidence="1">
    <location>
        <begin position="195"/>
        <end position="202"/>
    </location>
    <ligand>
        <name>ATP</name>
        <dbReference type="ChEBI" id="CHEBI:30616"/>
    </ligand>
</feature>
<feature type="binding site" evidence="1">
    <location>
        <position position="417"/>
    </location>
    <ligand>
        <name>Zn(2+)</name>
        <dbReference type="ChEBI" id="CHEBI:29105"/>
        <note>catalytic</note>
    </ligand>
</feature>
<feature type="binding site" evidence="1">
    <location>
        <position position="421"/>
    </location>
    <ligand>
        <name>Zn(2+)</name>
        <dbReference type="ChEBI" id="CHEBI:29105"/>
        <note>catalytic</note>
    </ligand>
</feature>
<feature type="binding site" evidence="1">
    <location>
        <position position="495"/>
    </location>
    <ligand>
        <name>Zn(2+)</name>
        <dbReference type="ChEBI" id="CHEBI:29105"/>
        <note>catalytic</note>
    </ligand>
</feature>
<gene>
    <name evidence="1" type="primary">ftsH</name>
    <name type="ordered locus">RP043</name>
</gene>
<protein>
    <recommendedName>
        <fullName evidence="1">ATP-dependent zinc metalloprotease FtsH</fullName>
        <ecNumber evidence="1">3.4.24.-</ecNumber>
    </recommendedName>
</protein>
<organism>
    <name type="scientific">Rickettsia prowazekii (strain Madrid E)</name>
    <dbReference type="NCBI Taxonomy" id="272947"/>
    <lineage>
        <taxon>Bacteria</taxon>
        <taxon>Pseudomonadati</taxon>
        <taxon>Pseudomonadota</taxon>
        <taxon>Alphaproteobacteria</taxon>
        <taxon>Rickettsiales</taxon>
        <taxon>Rickettsiaceae</taxon>
        <taxon>Rickettsieae</taxon>
        <taxon>Rickettsia</taxon>
        <taxon>typhus group</taxon>
    </lineage>
</organism>
<name>FTSH_RICPR</name>
<dbReference type="EC" id="3.4.24.-" evidence="1"/>
<dbReference type="EMBL" id="AJ235270">
    <property type="protein sequence ID" value="CAA14514.1"/>
    <property type="molecule type" value="Genomic_DNA"/>
</dbReference>
<dbReference type="PIR" id="C71712">
    <property type="entry name" value="C71712"/>
</dbReference>
<dbReference type="RefSeq" id="NP_220437.1">
    <property type="nucleotide sequence ID" value="NC_000963.1"/>
</dbReference>
<dbReference type="RefSeq" id="WP_004596636.1">
    <property type="nucleotide sequence ID" value="NC_000963.1"/>
</dbReference>
<dbReference type="SMR" id="Q9ZEA2"/>
<dbReference type="STRING" id="272947.gene:17555126"/>
<dbReference type="EnsemblBacteria" id="CAA14514">
    <property type="protein sequence ID" value="CAA14514"/>
    <property type="gene ID" value="CAA14514"/>
</dbReference>
<dbReference type="GeneID" id="57569171"/>
<dbReference type="KEGG" id="rpr:RP043"/>
<dbReference type="PATRIC" id="fig|272947.5.peg.44"/>
<dbReference type="eggNOG" id="COG0465">
    <property type="taxonomic scope" value="Bacteria"/>
</dbReference>
<dbReference type="HOGENOM" id="CLU_000688_16_2_5"/>
<dbReference type="OrthoDB" id="9809379at2"/>
<dbReference type="Proteomes" id="UP000002480">
    <property type="component" value="Chromosome"/>
</dbReference>
<dbReference type="GO" id="GO:0005886">
    <property type="term" value="C:plasma membrane"/>
    <property type="evidence" value="ECO:0007669"/>
    <property type="project" value="UniProtKB-SubCell"/>
</dbReference>
<dbReference type="GO" id="GO:0005524">
    <property type="term" value="F:ATP binding"/>
    <property type="evidence" value="ECO:0007669"/>
    <property type="project" value="UniProtKB-UniRule"/>
</dbReference>
<dbReference type="GO" id="GO:0016887">
    <property type="term" value="F:ATP hydrolysis activity"/>
    <property type="evidence" value="ECO:0007669"/>
    <property type="project" value="UniProtKB-UniRule"/>
</dbReference>
<dbReference type="GO" id="GO:0004176">
    <property type="term" value="F:ATP-dependent peptidase activity"/>
    <property type="evidence" value="ECO:0007669"/>
    <property type="project" value="InterPro"/>
</dbReference>
<dbReference type="GO" id="GO:0004222">
    <property type="term" value="F:metalloendopeptidase activity"/>
    <property type="evidence" value="ECO:0007669"/>
    <property type="project" value="InterPro"/>
</dbReference>
<dbReference type="GO" id="GO:0008270">
    <property type="term" value="F:zinc ion binding"/>
    <property type="evidence" value="ECO:0007669"/>
    <property type="project" value="UniProtKB-UniRule"/>
</dbReference>
<dbReference type="GO" id="GO:0030163">
    <property type="term" value="P:protein catabolic process"/>
    <property type="evidence" value="ECO:0007669"/>
    <property type="project" value="UniProtKB-UniRule"/>
</dbReference>
<dbReference type="GO" id="GO:0006508">
    <property type="term" value="P:proteolysis"/>
    <property type="evidence" value="ECO:0007669"/>
    <property type="project" value="UniProtKB-KW"/>
</dbReference>
<dbReference type="CDD" id="cd19501">
    <property type="entry name" value="RecA-like_FtsH"/>
    <property type="match status" value="1"/>
</dbReference>
<dbReference type="FunFam" id="1.10.8.60:FF:000001">
    <property type="entry name" value="ATP-dependent zinc metalloprotease FtsH"/>
    <property type="match status" value="1"/>
</dbReference>
<dbReference type="FunFam" id="1.20.58.760:FF:000001">
    <property type="entry name" value="ATP-dependent zinc metalloprotease FtsH"/>
    <property type="match status" value="1"/>
</dbReference>
<dbReference type="FunFam" id="3.40.50.300:FF:000001">
    <property type="entry name" value="ATP-dependent zinc metalloprotease FtsH"/>
    <property type="match status" value="1"/>
</dbReference>
<dbReference type="Gene3D" id="1.10.8.60">
    <property type="match status" value="1"/>
</dbReference>
<dbReference type="Gene3D" id="3.30.720.210">
    <property type="match status" value="1"/>
</dbReference>
<dbReference type="Gene3D" id="3.40.50.300">
    <property type="entry name" value="P-loop containing nucleotide triphosphate hydrolases"/>
    <property type="match status" value="1"/>
</dbReference>
<dbReference type="Gene3D" id="1.20.58.760">
    <property type="entry name" value="Peptidase M41"/>
    <property type="match status" value="1"/>
</dbReference>
<dbReference type="HAMAP" id="MF_01458">
    <property type="entry name" value="FtsH"/>
    <property type="match status" value="1"/>
</dbReference>
<dbReference type="InterPro" id="IPR003593">
    <property type="entry name" value="AAA+_ATPase"/>
</dbReference>
<dbReference type="InterPro" id="IPR041569">
    <property type="entry name" value="AAA_lid_3"/>
</dbReference>
<dbReference type="InterPro" id="IPR003959">
    <property type="entry name" value="ATPase_AAA_core"/>
</dbReference>
<dbReference type="InterPro" id="IPR003960">
    <property type="entry name" value="ATPase_AAA_CS"/>
</dbReference>
<dbReference type="InterPro" id="IPR005936">
    <property type="entry name" value="FtsH"/>
</dbReference>
<dbReference type="InterPro" id="IPR027417">
    <property type="entry name" value="P-loop_NTPase"/>
</dbReference>
<dbReference type="InterPro" id="IPR011546">
    <property type="entry name" value="Pept_M41_FtsH_extracell"/>
</dbReference>
<dbReference type="InterPro" id="IPR000642">
    <property type="entry name" value="Peptidase_M41"/>
</dbReference>
<dbReference type="InterPro" id="IPR037219">
    <property type="entry name" value="Peptidase_M41-like"/>
</dbReference>
<dbReference type="NCBIfam" id="TIGR01241">
    <property type="entry name" value="FtsH_fam"/>
    <property type="match status" value="1"/>
</dbReference>
<dbReference type="PANTHER" id="PTHR23076:SF97">
    <property type="entry name" value="ATP-DEPENDENT ZINC METALLOPROTEASE YME1L1"/>
    <property type="match status" value="1"/>
</dbReference>
<dbReference type="PANTHER" id="PTHR23076">
    <property type="entry name" value="METALLOPROTEASE M41 FTSH"/>
    <property type="match status" value="1"/>
</dbReference>
<dbReference type="Pfam" id="PF00004">
    <property type="entry name" value="AAA"/>
    <property type="match status" value="1"/>
</dbReference>
<dbReference type="Pfam" id="PF17862">
    <property type="entry name" value="AAA_lid_3"/>
    <property type="match status" value="1"/>
</dbReference>
<dbReference type="Pfam" id="PF06480">
    <property type="entry name" value="FtsH_ext"/>
    <property type="match status" value="1"/>
</dbReference>
<dbReference type="Pfam" id="PF01434">
    <property type="entry name" value="Peptidase_M41"/>
    <property type="match status" value="1"/>
</dbReference>
<dbReference type="SMART" id="SM00382">
    <property type="entry name" value="AAA"/>
    <property type="match status" value="1"/>
</dbReference>
<dbReference type="SUPFAM" id="SSF140990">
    <property type="entry name" value="FtsH protease domain-like"/>
    <property type="match status" value="1"/>
</dbReference>
<dbReference type="SUPFAM" id="SSF52540">
    <property type="entry name" value="P-loop containing nucleoside triphosphate hydrolases"/>
    <property type="match status" value="1"/>
</dbReference>
<dbReference type="PROSITE" id="PS00674">
    <property type="entry name" value="AAA"/>
    <property type="match status" value="1"/>
</dbReference>
<accession>Q9ZEA2</accession>
<comment type="function">
    <text evidence="1">Acts as a processive, ATP-dependent zinc metallopeptidase for both cytoplasmic and membrane proteins. Plays a role in the quality control of integral membrane proteins.</text>
</comment>
<comment type="cofactor">
    <cofactor evidence="1">
        <name>Zn(2+)</name>
        <dbReference type="ChEBI" id="CHEBI:29105"/>
    </cofactor>
    <text evidence="1">Binds 1 zinc ion per subunit.</text>
</comment>
<comment type="subunit">
    <text evidence="1">Homohexamer.</text>
</comment>
<comment type="subcellular location">
    <subcellularLocation>
        <location evidence="1">Cell inner membrane</location>
        <topology evidence="1">Multi-pass membrane protein</topology>
        <orientation evidence="1">Cytoplasmic side</orientation>
    </subcellularLocation>
</comment>
<comment type="similarity">
    <text evidence="1">In the central section; belongs to the AAA ATPase family.</text>
</comment>
<comment type="similarity">
    <text evidence="1">In the C-terminal section; belongs to the peptidase M41 family.</text>
</comment>
<reference key="1">
    <citation type="journal article" date="1998" name="Nature">
        <title>The genome sequence of Rickettsia prowazekii and the origin of mitochondria.</title>
        <authorList>
            <person name="Andersson S.G.E."/>
            <person name="Zomorodipour A."/>
            <person name="Andersson J.O."/>
            <person name="Sicheritz-Ponten T."/>
            <person name="Alsmark U.C.M."/>
            <person name="Podowski R.M."/>
            <person name="Naeslund A.K."/>
            <person name="Eriksson A.-S."/>
            <person name="Winkler H.H."/>
            <person name="Kurland C.G."/>
        </authorList>
    </citation>
    <scope>NUCLEOTIDE SEQUENCE [LARGE SCALE GENOMIC DNA]</scope>
    <source>
        <strain>Madrid E</strain>
    </source>
</reference>
<evidence type="ECO:0000255" key="1">
    <source>
        <dbReference type="HAMAP-Rule" id="MF_01458"/>
    </source>
</evidence>